<reference key="1">
    <citation type="submission" date="2008-01" db="EMBL/GenBank/DDBJ databases">
        <title>Complete sequence of Thermoanaerobacter pseudethanolicus 39E.</title>
        <authorList>
            <person name="Copeland A."/>
            <person name="Lucas S."/>
            <person name="Lapidus A."/>
            <person name="Barry K."/>
            <person name="Glavina del Rio T."/>
            <person name="Dalin E."/>
            <person name="Tice H."/>
            <person name="Pitluck S."/>
            <person name="Bruce D."/>
            <person name="Goodwin L."/>
            <person name="Saunders E."/>
            <person name="Brettin T."/>
            <person name="Detter J.C."/>
            <person name="Han C."/>
            <person name="Schmutz J."/>
            <person name="Larimer F."/>
            <person name="Land M."/>
            <person name="Hauser L."/>
            <person name="Kyrpides N."/>
            <person name="Lykidis A."/>
            <person name="Hemme C."/>
            <person name="Fields M.W."/>
            <person name="He Z."/>
            <person name="Zhou J."/>
            <person name="Richardson P."/>
        </authorList>
    </citation>
    <scope>NUCLEOTIDE SEQUENCE [LARGE SCALE GENOMIC DNA]</scope>
    <source>
        <strain>ATCC 33223 / DSM 2355 / 39E</strain>
    </source>
</reference>
<name>CLPP_THEP3</name>
<protein>
    <recommendedName>
        <fullName evidence="1">ATP-dependent Clp protease proteolytic subunit</fullName>
        <ecNumber evidence="1">3.4.21.92</ecNumber>
    </recommendedName>
    <alternativeName>
        <fullName evidence="1">Endopeptidase Clp</fullName>
    </alternativeName>
</protein>
<evidence type="ECO:0000255" key="1">
    <source>
        <dbReference type="HAMAP-Rule" id="MF_00444"/>
    </source>
</evidence>
<sequence length="195" mass="21691">MSLVPIVVEQTNRGERSYDIFSRLLKDRIVFLGEEINDTTASLVIAQLLFLEAEDPDKDIWLYINSPGGSITAGFAIYDTMQYIKPDVVTLCVGMAASMAAFLLAAGAKGKRFALPNSEIMIHQPLGGMQGQATDIKIHAERILKLRDKLDKILAENTGQPIEKIKADTERDFFMDAEDAKAYGIIDEVLIRNKR</sequence>
<feature type="chain" id="PRO_1000124718" description="ATP-dependent Clp protease proteolytic subunit">
    <location>
        <begin position="1"/>
        <end position="195"/>
    </location>
</feature>
<feature type="active site" description="Nucleophile" evidence="1">
    <location>
        <position position="98"/>
    </location>
</feature>
<feature type="active site" evidence="1">
    <location>
        <position position="123"/>
    </location>
</feature>
<organism>
    <name type="scientific">Thermoanaerobacter pseudethanolicus (strain ATCC 33223 / 39E)</name>
    <name type="common">Clostridium thermohydrosulfuricum</name>
    <dbReference type="NCBI Taxonomy" id="340099"/>
    <lineage>
        <taxon>Bacteria</taxon>
        <taxon>Bacillati</taxon>
        <taxon>Bacillota</taxon>
        <taxon>Clostridia</taxon>
        <taxon>Thermoanaerobacterales</taxon>
        <taxon>Thermoanaerobacteraceae</taxon>
        <taxon>Thermoanaerobacter</taxon>
    </lineage>
</organism>
<gene>
    <name evidence="1" type="primary">clpP</name>
    <name type="ordered locus">Teth39_1651</name>
</gene>
<comment type="function">
    <text evidence="1">Cleaves peptides in various proteins in a process that requires ATP hydrolysis. Has a chymotrypsin-like activity. Plays a major role in the degradation of misfolded proteins.</text>
</comment>
<comment type="catalytic activity">
    <reaction evidence="1">
        <text>Hydrolysis of proteins to small peptides in the presence of ATP and magnesium. alpha-casein is the usual test substrate. In the absence of ATP, only oligopeptides shorter than five residues are hydrolyzed (such as succinyl-Leu-Tyr-|-NHMec, and Leu-Tyr-Leu-|-Tyr-Trp, in which cleavage of the -Tyr-|-Leu- and -Tyr-|-Trp bonds also occurs).</text>
        <dbReference type="EC" id="3.4.21.92"/>
    </reaction>
</comment>
<comment type="subunit">
    <text evidence="1">Fourteen ClpP subunits assemble into 2 heptameric rings which stack back to back to give a disk-like structure with a central cavity, resembling the structure of eukaryotic proteasomes.</text>
</comment>
<comment type="subcellular location">
    <subcellularLocation>
        <location evidence="1">Cytoplasm</location>
    </subcellularLocation>
</comment>
<comment type="similarity">
    <text evidence="1">Belongs to the peptidase S14 family.</text>
</comment>
<proteinExistence type="inferred from homology"/>
<dbReference type="EC" id="3.4.21.92" evidence="1"/>
<dbReference type="EMBL" id="CP000924">
    <property type="protein sequence ID" value="ABY95292.1"/>
    <property type="molecule type" value="Genomic_DNA"/>
</dbReference>
<dbReference type="RefSeq" id="WP_003868372.1">
    <property type="nucleotide sequence ID" value="NC_010321.1"/>
</dbReference>
<dbReference type="SMR" id="B0KBA4"/>
<dbReference type="STRING" id="340099.Teth39_1651"/>
<dbReference type="MEROPS" id="S14.001"/>
<dbReference type="KEGG" id="tpd:Teth39_1651"/>
<dbReference type="eggNOG" id="COG0740">
    <property type="taxonomic scope" value="Bacteria"/>
</dbReference>
<dbReference type="HOGENOM" id="CLU_058707_3_2_9"/>
<dbReference type="Proteomes" id="UP000002156">
    <property type="component" value="Chromosome"/>
</dbReference>
<dbReference type="GO" id="GO:0005737">
    <property type="term" value="C:cytoplasm"/>
    <property type="evidence" value="ECO:0007669"/>
    <property type="project" value="UniProtKB-SubCell"/>
</dbReference>
<dbReference type="GO" id="GO:0009368">
    <property type="term" value="C:endopeptidase Clp complex"/>
    <property type="evidence" value="ECO:0007669"/>
    <property type="project" value="TreeGrafter"/>
</dbReference>
<dbReference type="GO" id="GO:0004176">
    <property type="term" value="F:ATP-dependent peptidase activity"/>
    <property type="evidence" value="ECO:0007669"/>
    <property type="project" value="InterPro"/>
</dbReference>
<dbReference type="GO" id="GO:0051117">
    <property type="term" value="F:ATPase binding"/>
    <property type="evidence" value="ECO:0007669"/>
    <property type="project" value="TreeGrafter"/>
</dbReference>
<dbReference type="GO" id="GO:0004252">
    <property type="term" value="F:serine-type endopeptidase activity"/>
    <property type="evidence" value="ECO:0007669"/>
    <property type="project" value="UniProtKB-UniRule"/>
</dbReference>
<dbReference type="GO" id="GO:0006515">
    <property type="term" value="P:protein quality control for misfolded or incompletely synthesized proteins"/>
    <property type="evidence" value="ECO:0007669"/>
    <property type="project" value="TreeGrafter"/>
</dbReference>
<dbReference type="CDD" id="cd07017">
    <property type="entry name" value="S14_ClpP_2"/>
    <property type="match status" value="1"/>
</dbReference>
<dbReference type="FunFam" id="3.90.226.10:FF:000001">
    <property type="entry name" value="ATP-dependent Clp protease proteolytic subunit"/>
    <property type="match status" value="1"/>
</dbReference>
<dbReference type="Gene3D" id="3.90.226.10">
    <property type="entry name" value="2-enoyl-CoA Hydratase, Chain A, domain 1"/>
    <property type="match status" value="1"/>
</dbReference>
<dbReference type="HAMAP" id="MF_00444">
    <property type="entry name" value="ClpP"/>
    <property type="match status" value="1"/>
</dbReference>
<dbReference type="InterPro" id="IPR001907">
    <property type="entry name" value="ClpP"/>
</dbReference>
<dbReference type="InterPro" id="IPR029045">
    <property type="entry name" value="ClpP/crotonase-like_dom_sf"/>
</dbReference>
<dbReference type="InterPro" id="IPR023562">
    <property type="entry name" value="ClpP/TepA"/>
</dbReference>
<dbReference type="InterPro" id="IPR033135">
    <property type="entry name" value="ClpP_His_AS"/>
</dbReference>
<dbReference type="InterPro" id="IPR018215">
    <property type="entry name" value="ClpP_Ser_AS"/>
</dbReference>
<dbReference type="NCBIfam" id="TIGR00493">
    <property type="entry name" value="clpP"/>
    <property type="match status" value="1"/>
</dbReference>
<dbReference type="NCBIfam" id="NF001368">
    <property type="entry name" value="PRK00277.1"/>
    <property type="match status" value="1"/>
</dbReference>
<dbReference type="NCBIfam" id="NF009205">
    <property type="entry name" value="PRK12553.1"/>
    <property type="match status" value="1"/>
</dbReference>
<dbReference type="PANTHER" id="PTHR10381">
    <property type="entry name" value="ATP-DEPENDENT CLP PROTEASE PROTEOLYTIC SUBUNIT"/>
    <property type="match status" value="1"/>
</dbReference>
<dbReference type="PANTHER" id="PTHR10381:SF70">
    <property type="entry name" value="ATP-DEPENDENT CLP PROTEASE PROTEOLYTIC SUBUNIT"/>
    <property type="match status" value="1"/>
</dbReference>
<dbReference type="Pfam" id="PF00574">
    <property type="entry name" value="CLP_protease"/>
    <property type="match status" value="1"/>
</dbReference>
<dbReference type="PRINTS" id="PR00127">
    <property type="entry name" value="CLPPROTEASEP"/>
</dbReference>
<dbReference type="SUPFAM" id="SSF52096">
    <property type="entry name" value="ClpP/crotonase"/>
    <property type="match status" value="1"/>
</dbReference>
<dbReference type="PROSITE" id="PS00382">
    <property type="entry name" value="CLP_PROTEASE_HIS"/>
    <property type="match status" value="1"/>
</dbReference>
<dbReference type="PROSITE" id="PS00381">
    <property type="entry name" value="CLP_PROTEASE_SER"/>
    <property type="match status" value="1"/>
</dbReference>
<keyword id="KW-0963">Cytoplasm</keyword>
<keyword id="KW-0378">Hydrolase</keyword>
<keyword id="KW-0645">Protease</keyword>
<keyword id="KW-1185">Reference proteome</keyword>
<keyword id="KW-0720">Serine protease</keyword>
<accession>B0KBA4</accession>